<protein>
    <recommendedName>
        <fullName>Uncharacterized ferredoxin-like protein bbp_166</fullName>
    </recommendedName>
</protein>
<name>Y166_BUCBP</name>
<proteinExistence type="predicted"/>
<gene>
    <name type="ordered locus">bbp_166</name>
</gene>
<evidence type="ECO:0000255" key="1">
    <source>
        <dbReference type="PROSITE-ProRule" id="PRU00465"/>
    </source>
</evidence>
<evidence type="ECO:0000305" key="2"/>
<comment type="cofactor">
    <cofactor evidence="2">
        <name>[2Fe-2S] cluster</name>
        <dbReference type="ChEBI" id="CHEBI:190135"/>
    </cofactor>
    <text evidence="2">Binds 1 [2Fe-2S] cluster.</text>
</comment>
<accession>Q89AS6</accession>
<reference key="1">
    <citation type="journal article" date="2003" name="Proc. Natl. Acad. Sci. U.S.A.">
        <title>Reductive genome evolution in Buchnera aphidicola.</title>
        <authorList>
            <person name="van Ham R.C.H.J."/>
            <person name="Kamerbeek J."/>
            <person name="Palacios C."/>
            <person name="Rausell C."/>
            <person name="Abascal F."/>
            <person name="Bastolla U."/>
            <person name="Fernandez J.M."/>
            <person name="Jimenez L."/>
            <person name="Postigo M."/>
            <person name="Silva F.J."/>
            <person name="Tamames J."/>
            <person name="Viguera E."/>
            <person name="Latorre A."/>
            <person name="Valencia A."/>
            <person name="Moran F."/>
            <person name="Moya A."/>
        </authorList>
    </citation>
    <scope>NUCLEOTIDE SEQUENCE [LARGE SCALE GENOMIC DNA]</scope>
    <source>
        <strain>Bp</strain>
    </source>
</reference>
<sequence length="87" mass="9869">MINSKIIILNNNKVIYYKPQNITLISILEKNDIILDSQCKQGYCGSCRIKLLKGHVYYKNIFPLASCKPKDIFPCCCTISGSILIKI</sequence>
<feature type="chain" id="PRO_0000189420" description="Uncharacterized ferredoxin-like protein bbp_166">
    <location>
        <begin position="1"/>
        <end position="87"/>
    </location>
</feature>
<feature type="domain" description="2Fe-2S ferredoxin-type" evidence="1">
    <location>
        <begin position="4"/>
        <end position="87"/>
    </location>
</feature>
<feature type="binding site" evidence="1">
    <location>
        <position position="39"/>
    </location>
    <ligand>
        <name>[2Fe-2S] cluster</name>
        <dbReference type="ChEBI" id="CHEBI:190135"/>
    </ligand>
</feature>
<feature type="binding site" evidence="1">
    <location>
        <position position="44"/>
    </location>
    <ligand>
        <name>[2Fe-2S] cluster</name>
        <dbReference type="ChEBI" id="CHEBI:190135"/>
    </ligand>
</feature>
<feature type="binding site" evidence="1">
    <location>
        <position position="47"/>
    </location>
    <ligand>
        <name>[2Fe-2S] cluster</name>
        <dbReference type="ChEBI" id="CHEBI:190135"/>
    </ligand>
</feature>
<feature type="binding site" evidence="1">
    <location>
        <position position="75"/>
    </location>
    <ligand>
        <name>[2Fe-2S] cluster</name>
        <dbReference type="ChEBI" id="CHEBI:190135"/>
    </ligand>
</feature>
<dbReference type="EMBL" id="AE016826">
    <property type="protein sequence ID" value="AAO26899.1"/>
    <property type="molecule type" value="Genomic_DNA"/>
</dbReference>
<dbReference type="RefSeq" id="WP_011091300.1">
    <property type="nucleotide sequence ID" value="NC_004545.1"/>
</dbReference>
<dbReference type="SMR" id="Q89AS6"/>
<dbReference type="STRING" id="224915.bbp_166"/>
<dbReference type="KEGG" id="bab:bbp_166"/>
<dbReference type="eggNOG" id="COG0633">
    <property type="taxonomic scope" value="Bacteria"/>
</dbReference>
<dbReference type="HOGENOM" id="CLU_082632_6_3_6"/>
<dbReference type="OrthoDB" id="9806195at2"/>
<dbReference type="Proteomes" id="UP000000601">
    <property type="component" value="Chromosome"/>
</dbReference>
<dbReference type="GO" id="GO:0051537">
    <property type="term" value="F:2 iron, 2 sulfur cluster binding"/>
    <property type="evidence" value="ECO:0007669"/>
    <property type="project" value="UniProtKB-KW"/>
</dbReference>
<dbReference type="GO" id="GO:0046872">
    <property type="term" value="F:metal ion binding"/>
    <property type="evidence" value="ECO:0007669"/>
    <property type="project" value="UniProtKB-KW"/>
</dbReference>
<dbReference type="CDD" id="cd00207">
    <property type="entry name" value="fer2"/>
    <property type="match status" value="1"/>
</dbReference>
<dbReference type="Gene3D" id="3.10.20.30">
    <property type="match status" value="1"/>
</dbReference>
<dbReference type="InterPro" id="IPR036010">
    <property type="entry name" value="2Fe-2S_ferredoxin-like_sf"/>
</dbReference>
<dbReference type="InterPro" id="IPR001041">
    <property type="entry name" value="2Fe-2S_ferredoxin-type"/>
</dbReference>
<dbReference type="InterPro" id="IPR006058">
    <property type="entry name" value="2Fe2S_fd_BS"/>
</dbReference>
<dbReference type="InterPro" id="IPR012675">
    <property type="entry name" value="Beta-grasp_dom_sf"/>
</dbReference>
<dbReference type="NCBIfam" id="NF007985">
    <property type="entry name" value="PRK10713.1"/>
    <property type="match status" value="1"/>
</dbReference>
<dbReference type="Pfam" id="PF00111">
    <property type="entry name" value="Fer2"/>
    <property type="match status" value="1"/>
</dbReference>
<dbReference type="SUPFAM" id="SSF54292">
    <property type="entry name" value="2Fe-2S ferredoxin-like"/>
    <property type="match status" value="1"/>
</dbReference>
<dbReference type="PROSITE" id="PS00197">
    <property type="entry name" value="2FE2S_FER_1"/>
    <property type="match status" value="1"/>
</dbReference>
<dbReference type="PROSITE" id="PS51085">
    <property type="entry name" value="2FE2S_FER_2"/>
    <property type="match status" value="1"/>
</dbReference>
<keyword id="KW-0001">2Fe-2S</keyword>
<keyword id="KW-0249">Electron transport</keyword>
<keyword id="KW-0408">Iron</keyword>
<keyword id="KW-0411">Iron-sulfur</keyword>
<keyword id="KW-0479">Metal-binding</keyword>
<keyword id="KW-1185">Reference proteome</keyword>
<keyword id="KW-0813">Transport</keyword>
<organism>
    <name type="scientific">Buchnera aphidicola subsp. Baizongia pistaciae (strain Bp)</name>
    <dbReference type="NCBI Taxonomy" id="224915"/>
    <lineage>
        <taxon>Bacteria</taxon>
        <taxon>Pseudomonadati</taxon>
        <taxon>Pseudomonadota</taxon>
        <taxon>Gammaproteobacteria</taxon>
        <taxon>Enterobacterales</taxon>
        <taxon>Erwiniaceae</taxon>
        <taxon>Buchnera</taxon>
    </lineage>
</organism>